<accession>B7NUV4</accession>
<keyword id="KW-0998">Cell outer membrane</keyword>
<keyword id="KW-0961">Cell wall biogenesis/degradation</keyword>
<keyword id="KW-0449">Lipoprotein</keyword>
<keyword id="KW-0456">Lyase</keyword>
<keyword id="KW-0472">Membrane</keyword>
<keyword id="KW-0564">Palmitate</keyword>
<keyword id="KW-0732">Signal</keyword>
<name>EMTA_ECO7I</name>
<sequence length="203" mass="22213">MKLRWFAFLIVLLAGCSSKHDYTNPPWNAKVPVQRAMQWMPISQKAGAAWGVDPQLITAIIAIESGGNPNAVSKSNAIGLMQIKASTSGRDVYRRMGWSGEPTTSELKNPERNISMGAAYLNILETGPLAGIEDPKVLQYALVVSYANGAGALLRTFSSDRKKAISKINDLDADEFLDHVARNHPAPQAPRYIYKLEQALDAM</sequence>
<proteinExistence type="inferred from homology"/>
<evidence type="ECO:0000255" key="1">
    <source>
        <dbReference type="HAMAP-Rule" id="MF_01381"/>
    </source>
</evidence>
<dbReference type="EC" id="4.2.2.n2" evidence="1"/>
<dbReference type="EMBL" id="CU928164">
    <property type="protein sequence ID" value="CAR17656.1"/>
    <property type="molecule type" value="Genomic_DNA"/>
</dbReference>
<dbReference type="RefSeq" id="WP_001295994.1">
    <property type="nucleotide sequence ID" value="NC_011750.1"/>
</dbReference>
<dbReference type="RefSeq" id="YP_002407524.1">
    <property type="nucleotide sequence ID" value="NC_011750.1"/>
</dbReference>
<dbReference type="SMR" id="B7NUV4"/>
<dbReference type="STRING" id="585057.ECIAI39_1524"/>
<dbReference type="CAZy" id="GH23">
    <property type="family name" value="Glycoside Hydrolase Family 23"/>
</dbReference>
<dbReference type="KEGG" id="ect:ECIAI39_1524"/>
<dbReference type="PATRIC" id="fig|585057.6.peg.1593"/>
<dbReference type="HOGENOM" id="CLU_103257_0_0_6"/>
<dbReference type="Proteomes" id="UP000000749">
    <property type="component" value="Chromosome"/>
</dbReference>
<dbReference type="GO" id="GO:0009279">
    <property type="term" value="C:cell outer membrane"/>
    <property type="evidence" value="ECO:0007669"/>
    <property type="project" value="UniProtKB-SubCell"/>
</dbReference>
<dbReference type="GO" id="GO:0008932">
    <property type="term" value="F:lytic endotransglycosylase activity"/>
    <property type="evidence" value="ECO:0007669"/>
    <property type="project" value="InterPro"/>
</dbReference>
<dbReference type="GO" id="GO:0016998">
    <property type="term" value="P:cell wall macromolecule catabolic process"/>
    <property type="evidence" value="ECO:0007669"/>
    <property type="project" value="UniProtKB-UniRule"/>
</dbReference>
<dbReference type="GO" id="GO:0071555">
    <property type="term" value="P:cell wall organization"/>
    <property type="evidence" value="ECO:0007669"/>
    <property type="project" value="UniProtKB-KW"/>
</dbReference>
<dbReference type="GO" id="GO:0000270">
    <property type="term" value="P:peptidoglycan metabolic process"/>
    <property type="evidence" value="ECO:0007669"/>
    <property type="project" value="InterPro"/>
</dbReference>
<dbReference type="CDD" id="cd16893">
    <property type="entry name" value="LT_MltC_MltE"/>
    <property type="match status" value="1"/>
</dbReference>
<dbReference type="FunFam" id="1.10.530.10:FF:000007">
    <property type="entry name" value="Endo-type membrane-bound lytic murein transglycosylase A"/>
    <property type="match status" value="1"/>
</dbReference>
<dbReference type="Gene3D" id="1.10.530.10">
    <property type="match status" value="1"/>
</dbReference>
<dbReference type="HAMAP" id="MF_01381">
    <property type="entry name" value="EmtA"/>
    <property type="match status" value="1"/>
</dbReference>
<dbReference type="InterPro" id="IPR023946">
    <property type="entry name" value="EmtA"/>
</dbReference>
<dbReference type="InterPro" id="IPR023346">
    <property type="entry name" value="Lysozyme-like_dom_sf"/>
</dbReference>
<dbReference type="InterPro" id="IPR000189">
    <property type="entry name" value="Transglyc_AS"/>
</dbReference>
<dbReference type="InterPro" id="IPR008258">
    <property type="entry name" value="Transglycosylase_SLT_dom_1"/>
</dbReference>
<dbReference type="NCBIfam" id="NF012014">
    <property type="entry name" value="PRK15470.1"/>
    <property type="match status" value="1"/>
</dbReference>
<dbReference type="PANTHER" id="PTHR37423:SF4">
    <property type="entry name" value="ENDO-TYPE MEMBRANE-BOUND LYTIC MUREIN TRANSGLYCOSYLASE A"/>
    <property type="match status" value="1"/>
</dbReference>
<dbReference type="PANTHER" id="PTHR37423">
    <property type="entry name" value="SOLUBLE LYTIC MUREIN TRANSGLYCOSYLASE-RELATED"/>
    <property type="match status" value="1"/>
</dbReference>
<dbReference type="Pfam" id="PF01464">
    <property type="entry name" value="SLT"/>
    <property type="match status" value="1"/>
</dbReference>
<dbReference type="SUPFAM" id="SSF53955">
    <property type="entry name" value="Lysozyme-like"/>
    <property type="match status" value="1"/>
</dbReference>
<dbReference type="PROSITE" id="PS51257">
    <property type="entry name" value="PROKAR_LIPOPROTEIN"/>
    <property type="match status" value="1"/>
</dbReference>
<dbReference type="PROSITE" id="PS00922">
    <property type="entry name" value="TRANSGLYCOSYLASE"/>
    <property type="match status" value="1"/>
</dbReference>
<gene>
    <name evidence="1" type="primary">emtA</name>
    <name type="ordered locus">ECIAI39_1524</name>
</gene>
<reference key="1">
    <citation type="journal article" date="2009" name="PLoS Genet.">
        <title>Organised genome dynamics in the Escherichia coli species results in highly diverse adaptive paths.</title>
        <authorList>
            <person name="Touchon M."/>
            <person name="Hoede C."/>
            <person name="Tenaillon O."/>
            <person name="Barbe V."/>
            <person name="Baeriswyl S."/>
            <person name="Bidet P."/>
            <person name="Bingen E."/>
            <person name="Bonacorsi S."/>
            <person name="Bouchier C."/>
            <person name="Bouvet O."/>
            <person name="Calteau A."/>
            <person name="Chiapello H."/>
            <person name="Clermont O."/>
            <person name="Cruveiller S."/>
            <person name="Danchin A."/>
            <person name="Diard M."/>
            <person name="Dossat C."/>
            <person name="Karoui M.E."/>
            <person name="Frapy E."/>
            <person name="Garry L."/>
            <person name="Ghigo J.M."/>
            <person name="Gilles A.M."/>
            <person name="Johnson J."/>
            <person name="Le Bouguenec C."/>
            <person name="Lescat M."/>
            <person name="Mangenot S."/>
            <person name="Martinez-Jehanne V."/>
            <person name="Matic I."/>
            <person name="Nassif X."/>
            <person name="Oztas S."/>
            <person name="Petit M.A."/>
            <person name="Pichon C."/>
            <person name="Rouy Z."/>
            <person name="Ruf C.S."/>
            <person name="Schneider D."/>
            <person name="Tourret J."/>
            <person name="Vacherie B."/>
            <person name="Vallenet D."/>
            <person name="Medigue C."/>
            <person name="Rocha E.P.C."/>
            <person name="Denamur E."/>
        </authorList>
    </citation>
    <scope>NUCLEOTIDE SEQUENCE [LARGE SCALE GENOMIC DNA]</scope>
    <source>
        <strain>IAI39 / ExPEC</strain>
    </source>
</reference>
<organism>
    <name type="scientific">Escherichia coli O7:K1 (strain IAI39 / ExPEC)</name>
    <dbReference type="NCBI Taxonomy" id="585057"/>
    <lineage>
        <taxon>Bacteria</taxon>
        <taxon>Pseudomonadati</taxon>
        <taxon>Pseudomonadota</taxon>
        <taxon>Gammaproteobacteria</taxon>
        <taxon>Enterobacterales</taxon>
        <taxon>Enterobacteriaceae</taxon>
        <taxon>Escherichia</taxon>
    </lineage>
</organism>
<protein>
    <recommendedName>
        <fullName evidence="1">Endo-type membrane-bound lytic murein transglycosylase A</fullName>
        <ecNumber evidence="1">4.2.2.n2</ecNumber>
    </recommendedName>
    <alternativeName>
        <fullName evidence="1">Peptidoglycan lytic endotransglycosylase</fullName>
    </alternativeName>
</protein>
<comment type="function">
    <text evidence="1">Murein-degrading enzyme. May play a role in recycling of muropeptides during cell elongation and/or cell division. Preferentially cleaves at a distance of more than two disaccharide units from the ends of the glycan chain.</text>
</comment>
<comment type="catalytic activity">
    <reaction evidence="1">
        <text>Endolytic cleavage of the (1-&gt;4)-beta-glycosidic linkage between N-acetylmuramic acid (MurNAc) and N-acetylglucosamine (GlcNAc) residues in peptidoglycan with concomitant formation of a 1,6-anhydrobond in the MurNAc residue.</text>
        <dbReference type="EC" id="4.2.2.n2"/>
    </reaction>
</comment>
<comment type="subcellular location">
    <subcellularLocation>
        <location evidence="1">Cell outer membrane</location>
        <topology evidence="1">Lipid-anchor</topology>
    </subcellularLocation>
</comment>
<comment type="similarity">
    <text evidence="1">Belongs to the transglycosylase Slt family.</text>
</comment>
<feature type="signal peptide" evidence="1">
    <location>
        <begin position="1"/>
        <end position="15"/>
    </location>
</feature>
<feature type="chain" id="PRO_1000144951" description="Endo-type membrane-bound lytic murein transglycosylase A">
    <location>
        <begin position="16"/>
        <end position="203"/>
    </location>
</feature>
<feature type="lipid moiety-binding region" description="N-palmitoyl cysteine" evidence="1">
    <location>
        <position position="16"/>
    </location>
</feature>
<feature type="lipid moiety-binding region" description="S-diacylglycerol cysteine" evidence="1">
    <location>
        <position position="16"/>
    </location>
</feature>